<evidence type="ECO:0000255" key="1">
    <source>
        <dbReference type="HAMAP-Rule" id="MF_00013"/>
    </source>
</evidence>
<evidence type="ECO:0000255" key="2">
    <source>
        <dbReference type="PROSITE-ProRule" id="PRU01067"/>
    </source>
</evidence>
<accession>Q3IJ80</accession>
<proteinExistence type="inferred from homology"/>
<name>LIPB_PSET1</name>
<protein>
    <recommendedName>
        <fullName evidence="1">Octanoyltransferase</fullName>
        <ecNumber evidence="1">2.3.1.181</ecNumber>
    </recommendedName>
    <alternativeName>
        <fullName evidence="1">Lipoate-protein ligase B</fullName>
    </alternativeName>
    <alternativeName>
        <fullName evidence="1">Lipoyl/octanoyl transferase</fullName>
    </alternativeName>
    <alternativeName>
        <fullName evidence="1">Octanoyl-[acyl-carrier-protein]-protein N-octanoyltransferase</fullName>
    </alternativeName>
</protein>
<sequence>MKENTLIVRQLGRQRYLPIWQKMQDFTDTRDDDSADEIWLVEHESVFTQGQAGKDEHLLAPGDIEVIKVDRGGQVTYHGPGQQMMYVLFNLRRLKIGVRELVTWLEECIIESLAEYDIQAYAKADAPGVYVNDSKIASLGLRVRRGCSFHGLALNVNMDLSPFLRINPCGYAGMNMVQTKELKGPQNLETAGAGLVKHMIKKLNATQVKHTEGFENE</sequence>
<gene>
    <name evidence="1" type="primary">lipB</name>
    <name type="ordered locus">PSHAa1020</name>
</gene>
<feature type="chain" id="PRO_0000242745" description="Octanoyltransferase">
    <location>
        <begin position="1"/>
        <end position="217"/>
    </location>
</feature>
<feature type="domain" description="BPL/LPL catalytic" evidence="2">
    <location>
        <begin position="32"/>
        <end position="207"/>
    </location>
</feature>
<feature type="active site" description="Acyl-thioester intermediate" evidence="1">
    <location>
        <position position="169"/>
    </location>
</feature>
<feature type="binding site" evidence="1">
    <location>
        <begin position="71"/>
        <end position="78"/>
    </location>
    <ligand>
        <name>substrate</name>
    </ligand>
</feature>
<feature type="binding site" evidence="1">
    <location>
        <begin position="138"/>
        <end position="140"/>
    </location>
    <ligand>
        <name>substrate</name>
    </ligand>
</feature>
<feature type="binding site" evidence="1">
    <location>
        <begin position="151"/>
        <end position="153"/>
    </location>
    <ligand>
        <name>substrate</name>
    </ligand>
</feature>
<feature type="site" description="Lowers pKa of active site Cys" evidence="1">
    <location>
        <position position="135"/>
    </location>
</feature>
<comment type="function">
    <text evidence="1">Catalyzes the transfer of endogenously produced octanoic acid from octanoyl-acyl-carrier-protein onto the lipoyl domains of lipoate-dependent enzymes. Lipoyl-ACP can also act as a substrate although octanoyl-ACP is likely to be the physiological substrate.</text>
</comment>
<comment type="catalytic activity">
    <reaction evidence="1">
        <text>octanoyl-[ACP] + L-lysyl-[protein] = N(6)-octanoyl-L-lysyl-[protein] + holo-[ACP] + H(+)</text>
        <dbReference type="Rhea" id="RHEA:17665"/>
        <dbReference type="Rhea" id="RHEA-COMP:9636"/>
        <dbReference type="Rhea" id="RHEA-COMP:9685"/>
        <dbReference type="Rhea" id="RHEA-COMP:9752"/>
        <dbReference type="Rhea" id="RHEA-COMP:9928"/>
        <dbReference type="ChEBI" id="CHEBI:15378"/>
        <dbReference type="ChEBI" id="CHEBI:29969"/>
        <dbReference type="ChEBI" id="CHEBI:64479"/>
        <dbReference type="ChEBI" id="CHEBI:78463"/>
        <dbReference type="ChEBI" id="CHEBI:78809"/>
        <dbReference type="EC" id="2.3.1.181"/>
    </reaction>
</comment>
<comment type="pathway">
    <text evidence="1">Protein modification; protein lipoylation via endogenous pathway; protein N(6)-(lipoyl)lysine from octanoyl-[acyl-carrier-protein]: step 1/2.</text>
</comment>
<comment type="subcellular location">
    <subcellularLocation>
        <location evidence="1">Cytoplasm</location>
    </subcellularLocation>
</comment>
<comment type="miscellaneous">
    <text evidence="1">In the reaction, the free carboxyl group of octanoic acid is attached via an amide linkage to the epsilon-amino group of a specific lysine residue of lipoyl domains of lipoate-dependent enzymes.</text>
</comment>
<comment type="similarity">
    <text evidence="1">Belongs to the LipB family.</text>
</comment>
<reference key="1">
    <citation type="journal article" date="2005" name="Genome Res.">
        <title>Coping with cold: the genome of the versatile marine Antarctica bacterium Pseudoalteromonas haloplanktis TAC125.</title>
        <authorList>
            <person name="Medigue C."/>
            <person name="Krin E."/>
            <person name="Pascal G."/>
            <person name="Barbe V."/>
            <person name="Bernsel A."/>
            <person name="Bertin P.N."/>
            <person name="Cheung F."/>
            <person name="Cruveiller S."/>
            <person name="D'Amico S."/>
            <person name="Duilio A."/>
            <person name="Fang G."/>
            <person name="Feller G."/>
            <person name="Ho C."/>
            <person name="Mangenot S."/>
            <person name="Marino G."/>
            <person name="Nilsson J."/>
            <person name="Parrilli E."/>
            <person name="Rocha E.P.C."/>
            <person name="Rouy Z."/>
            <person name="Sekowska A."/>
            <person name="Tutino M.L."/>
            <person name="Vallenet D."/>
            <person name="von Heijne G."/>
            <person name="Danchin A."/>
        </authorList>
    </citation>
    <scope>NUCLEOTIDE SEQUENCE [LARGE SCALE GENOMIC DNA]</scope>
    <source>
        <strain>TAC 125</strain>
    </source>
</reference>
<keyword id="KW-0012">Acyltransferase</keyword>
<keyword id="KW-0963">Cytoplasm</keyword>
<keyword id="KW-1185">Reference proteome</keyword>
<keyword id="KW-0808">Transferase</keyword>
<dbReference type="EC" id="2.3.1.181" evidence="1"/>
<dbReference type="EMBL" id="CR954246">
    <property type="protein sequence ID" value="CAI86098.1"/>
    <property type="molecule type" value="Genomic_DNA"/>
</dbReference>
<dbReference type="SMR" id="Q3IJ80"/>
<dbReference type="STRING" id="326442.PSHAa1020"/>
<dbReference type="KEGG" id="pha:PSHAa1020"/>
<dbReference type="PATRIC" id="fig|326442.8.peg.980"/>
<dbReference type="eggNOG" id="COG0321">
    <property type="taxonomic scope" value="Bacteria"/>
</dbReference>
<dbReference type="HOGENOM" id="CLU_035168_3_1_6"/>
<dbReference type="BioCyc" id="PHAL326442:PSHA_RS04985-MONOMER"/>
<dbReference type="UniPathway" id="UPA00538">
    <property type="reaction ID" value="UER00592"/>
</dbReference>
<dbReference type="Proteomes" id="UP000006843">
    <property type="component" value="Chromosome I"/>
</dbReference>
<dbReference type="GO" id="GO:0005737">
    <property type="term" value="C:cytoplasm"/>
    <property type="evidence" value="ECO:0007669"/>
    <property type="project" value="UniProtKB-SubCell"/>
</dbReference>
<dbReference type="GO" id="GO:0033819">
    <property type="term" value="F:lipoyl(octanoyl) transferase activity"/>
    <property type="evidence" value="ECO:0007669"/>
    <property type="project" value="UniProtKB-EC"/>
</dbReference>
<dbReference type="GO" id="GO:0036211">
    <property type="term" value="P:protein modification process"/>
    <property type="evidence" value="ECO:0007669"/>
    <property type="project" value="InterPro"/>
</dbReference>
<dbReference type="CDD" id="cd16444">
    <property type="entry name" value="LipB"/>
    <property type="match status" value="1"/>
</dbReference>
<dbReference type="FunFam" id="3.30.930.10:FF:000020">
    <property type="entry name" value="Octanoyltransferase"/>
    <property type="match status" value="1"/>
</dbReference>
<dbReference type="Gene3D" id="3.30.930.10">
    <property type="entry name" value="Bira Bifunctional Protein, Domain 2"/>
    <property type="match status" value="1"/>
</dbReference>
<dbReference type="HAMAP" id="MF_00013">
    <property type="entry name" value="LipB"/>
    <property type="match status" value="1"/>
</dbReference>
<dbReference type="InterPro" id="IPR045864">
    <property type="entry name" value="aa-tRNA-synth_II/BPL/LPL"/>
</dbReference>
<dbReference type="InterPro" id="IPR004143">
    <property type="entry name" value="BPL_LPL_catalytic"/>
</dbReference>
<dbReference type="InterPro" id="IPR000544">
    <property type="entry name" value="Octanoyltransferase"/>
</dbReference>
<dbReference type="InterPro" id="IPR020605">
    <property type="entry name" value="Octanoyltransferase_CS"/>
</dbReference>
<dbReference type="NCBIfam" id="TIGR00214">
    <property type="entry name" value="lipB"/>
    <property type="match status" value="1"/>
</dbReference>
<dbReference type="NCBIfam" id="NF010922">
    <property type="entry name" value="PRK14342.1"/>
    <property type="match status" value="1"/>
</dbReference>
<dbReference type="PANTHER" id="PTHR10993:SF7">
    <property type="entry name" value="LIPOYLTRANSFERASE 2, MITOCHONDRIAL-RELATED"/>
    <property type="match status" value="1"/>
</dbReference>
<dbReference type="PANTHER" id="PTHR10993">
    <property type="entry name" value="OCTANOYLTRANSFERASE"/>
    <property type="match status" value="1"/>
</dbReference>
<dbReference type="Pfam" id="PF21948">
    <property type="entry name" value="LplA-B_cat"/>
    <property type="match status" value="1"/>
</dbReference>
<dbReference type="PIRSF" id="PIRSF016262">
    <property type="entry name" value="LPLase"/>
    <property type="match status" value="1"/>
</dbReference>
<dbReference type="SUPFAM" id="SSF55681">
    <property type="entry name" value="Class II aaRS and biotin synthetases"/>
    <property type="match status" value="1"/>
</dbReference>
<dbReference type="PROSITE" id="PS51733">
    <property type="entry name" value="BPL_LPL_CATALYTIC"/>
    <property type="match status" value="1"/>
</dbReference>
<dbReference type="PROSITE" id="PS01313">
    <property type="entry name" value="LIPB"/>
    <property type="match status" value="1"/>
</dbReference>
<organism>
    <name type="scientific">Pseudoalteromonas translucida (strain TAC 125)</name>
    <dbReference type="NCBI Taxonomy" id="326442"/>
    <lineage>
        <taxon>Bacteria</taxon>
        <taxon>Pseudomonadati</taxon>
        <taxon>Pseudomonadota</taxon>
        <taxon>Gammaproteobacteria</taxon>
        <taxon>Alteromonadales</taxon>
        <taxon>Pseudoalteromonadaceae</taxon>
        <taxon>Pseudoalteromonas</taxon>
    </lineage>
</organism>